<dbReference type="EC" id="2.7.4.25" evidence="1"/>
<dbReference type="EMBL" id="BA000040">
    <property type="protein sequence ID" value="BAC46004.1"/>
    <property type="molecule type" value="Genomic_DNA"/>
</dbReference>
<dbReference type="RefSeq" id="NP_767379.1">
    <property type="nucleotide sequence ID" value="NC_004463.1"/>
</dbReference>
<dbReference type="RefSeq" id="WP_011083564.1">
    <property type="nucleotide sequence ID" value="NC_004463.1"/>
</dbReference>
<dbReference type="SMR" id="Q89WF1"/>
<dbReference type="FunCoup" id="Q89WF1">
    <property type="interactions" value="475"/>
</dbReference>
<dbReference type="STRING" id="224911.AAV28_00545"/>
<dbReference type="EnsemblBacteria" id="BAC46004">
    <property type="protein sequence ID" value="BAC46004"/>
    <property type="gene ID" value="BAC46004"/>
</dbReference>
<dbReference type="GeneID" id="46488015"/>
<dbReference type="KEGG" id="bja:blr0739"/>
<dbReference type="PATRIC" id="fig|224911.44.peg.111"/>
<dbReference type="eggNOG" id="COG0283">
    <property type="taxonomic scope" value="Bacteria"/>
</dbReference>
<dbReference type="HOGENOM" id="CLU_079959_0_1_5"/>
<dbReference type="InParanoid" id="Q89WF1"/>
<dbReference type="OrthoDB" id="9807434at2"/>
<dbReference type="PhylomeDB" id="Q89WF1"/>
<dbReference type="Proteomes" id="UP000002526">
    <property type="component" value="Chromosome"/>
</dbReference>
<dbReference type="GO" id="GO:0005829">
    <property type="term" value="C:cytosol"/>
    <property type="evidence" value="ECO:0000318"/>
    <property type="project" value="GO_Central"/>
</dbReference>
<dbReference type="GO" id="GO:0004127">
    <property type="term" value="F:(d)CMP kinase activity"/>
    <property type="evidence" value="ECO:0000318"/>
    <property type="project" value="GO_Central"/>
</dbReference>
<dbReference type="GO" id="GO:0005524">
    <property type="term" value="F:ATP binding"/>
    <property type="evidence" value="ECO:0007669"/>
    <property type="project" value="UniProtKB-UniRule"/>
</dbReference>
<dbReference type="GO" id="GO:0036430">
    <property type="term" value="F:CMP kinase activity"/>
    <property type="evidence" value="ECO:0007669"/>
    <property type="project" value="RHEA"/>
</dbReference>
<dbReference type="GO" id="GO:0036431">
    <property type="term" value="F:dCMP kinase activity"/>
    <property type="evidence" value="ECO:0007669"/>
    <property type="project" value="RHEA"/>
</dbReference>
<dbReference type="GO" id="GO:0015949">
    <property type="term" value="P:nucleobase-containing small molecule interconversion"/>
    <property type="evidence" value="ECO:0000318"/>
    <property type="project" value="GO_Central"/>
</dbReference>
<dbReference type="GO" id="GO:0006220">
    <property type="term" value="P:pyrimidine nucleotide metabolic process"/>
    <property type="evidence" value="ECO:0007669"/>
    <property type="project" value="UniProtKB-UniRule"/>
</dbReference>
<dbReference type="CDD" id="cd02020">
    <property type="entry name" value="CMPK"/>
    <property type="match status" value="1"/>
</dbReference>
<dbReference type="Gene3D" id="3.40.50.300">
    <property type="entry name" value="P-loop containing nucleotide triphosphate hydrolases"/>
    <property type="match status" value="1"/>
</dbReference>
<dbReference type="HAMAP" id="MF_00238">
    <property type="entry name" value="Cytidyl_kinase_type1"/>
    <property type="match status" value="1"/>
</dbReference>
<dbReference type="InterPro" id="IPR003136">
    <property type="entry name" value="Cytidylate_kin"/>
</dbReference>
<dbReference type="InterPro" id="IPR011994">
    <property type="entry name" value="Cytidylate_kinase_dom"/>
</dbReference>
<dbReference type="InterPro" id="IPR027417">
    <property type="entry name" value="P-loop_NTPase"/>
</dbReference>
<dbReference type="NCBIfam" id="TIGR00017">
    <property type="entry name" value="cmk"/>
    <property type="match status" value="1"/>
</dbReference>
<dbReference type="Pfam" id="PF02224">
    <property type="entry name" value="Cytidylate_kin"/>
    <property type="match status" value="1"/>
</dbReference>
<dbReference type="SUPFAM" id="SSF52540">
    <property type="entry name" value="P-loop containing nucleoside triphosphate hydrolases"/>
    <property type="match status" value="1"/>
</dbReference>
<proteinExistence type="inferred from homology"/>
<name>KCY_BRADU</name>
<reference key="1">
    <citation type="journal article" date="2002" name="DNA Res.">
        <title>Complete genomic sequence of nitrogen-fixing symbiotic bacterium Bradyrhizobium japonicum USDA110.</title>
        <authorList>
            <person name="Kaneko T."/>
            <person name="Nakamura Y."/>
            <person name="Sato S."/>
            <person name="Minamisawa K."/>
            <person name="Uchiumi T."/>
            <person name="Sasamoto S."/>
            <person name="Watanabe A."/>
            <person name="Idesawa K."/>
            <person name="Iriguchi M."/>
            <person name="Kawashima K."/>
            <person name="Kohara M."/>
            <person name="Matsumoto M."/>
            <person name="Shimpo S."/>
            <person name="Tsuruoka H."/>
            <person name="Wada T."/>
            <person name="Yamada M."/>
            <person name="Tabata S."/>
        </authorList>
    </citation>
    <scope>NUCLEOTIDE SEQUENCE [LARGE SCALE GENOMIC DNA]</scope>
    <source>
        <strain>JCM 10833 / BCRC 13528 / IAM 13628 / NBRC 14792 / USDA 110</strain>
    </source>
</reference>
<gene>
    <name evidence="1" type="primary">cmk</name>
    <name type="ordered locus">blr0739</name>
</gene>
<comment type="catalytic activity">
    <reaction evidence="1">
        <text>CMP + ATP = CDP + ADP</text>
        <dbReference type="Rhea" id="RHEA:11600"/>
        <dbReference type="ChEBI" id="CHEBI:30616"/>
        <dbReference type="ChEBI" id="CHEBI:58069"/>
        <dbReference type="ChEBI" id="CHEBI:60377"/>
        <dbReference type="ChEBI" id="CHEBI:456216"/>
        <dbReference type="EC" id="2.7.4.25"/>
    </reaction>
</comment>
<comment type="catalytic activity">
    <reaction evidence="1">
        <text>dCMP + ATP = dCDP + ADP</text>
        <dbReference type="Rhea" id="RHEA:25094"/>
        <dbReference type="ChEBI" id="CHEBI:30616"/>
        <dbReference type="ChEBI" id="CHEBI:57566"/>
        <dbReference type="ChEBI" id="CHEBI:58593"/>
        <dbReference type="ChEBI" id="CHEBI:456216"/>
        <dbReference type="EC" id="2.7.4.25"/>
    </reaction>
</comment>
<comment type="subcellular location">
    <subcellularLocation>
        <location evidence="1">Cytoplasm</location>
    </subcellularLocation>
</comment>
<comment type="similarity">
    <text evidence="1">Belongs to the cytidylate kinase family. Type 1 subfamily.</text>
</comment>
<keyword id="KW-0067">ATP-binding</keyword>
<keyword id="KW-0963">Cytoplasm</keyword>
<keyword id="KW-0418">Kinase</keyword>
<keyword id="KW-0547">Nucleotide-binding</keyword>
<keyword id="KW-1185">Reference proteome</keyword>
<keyword id="KW-0808">Transferase</keyword>
<feature type="chain" id="PRO_0000131890" description="Cytidylate kinase">
    <location>
        <begin position="1"/>
        <end position="212"/>
    </location>
</feature>
<feature type="binding site" evidence="1">
    <location>
        <begin position="7"/>
        <end position="15"/>
    </location>
    <ligand>
        <name>ATP</name>
        <dbReference type="ChEBI" id="CHEBI:30616"/>
    </ligand>
</feature>
<accession>Q89WF1</accession>
<organism>
    <name type="scientific">Bradyrhizobium diazoefficiens (strain JCM 10833 / BCRC 13528 / IAM 13628 / NBRC 14792 / USDA 110)</name>
    <dbReference type="NCBI Taxonomy" id="224911"/>
    <lineage>
        <taxon>Bacteria</taxon>
        <taxon>Pseudomonadati</taxon>
        <taxon>Pseudomonadota</taxon>
        <taxon>Alphaproteobacteria</taxon>
        <taxon>Hyphomicrobiales</taxon>
        <taxon>Nitrobacteraceae</taxon>
        <taxon>Bradyrhizobium</taxon>
    </lineage>
</organism>
<protein>
    <recommendedName>
        <fullName evidence="1">Cytidylate kinase</fullName>
        <shortName evidence="1">CK</shortName>
        <ecNumber evidence="1">2.7.4.25</ecNumber>
    </recommendedName>
    <alternativeName>
        <fullName evidence="1">Cytidine monophosphate kinase</fullName>
        <shortName evidence="1">CMP kinase</shortName>
    </alternativeName>
</protein>
<evidence type="ECO:0000255" key="1">
    <source>
        <dbReference type="HAMAP-Rule" id="MF_00238"/>
    </source>
</evidence>
<sequence length="212" mass="22701">MIIAIDGPAASGKGTLGKRLAHHYGYRHLDTGVIYRAVAYALMQSGHDLRDEAAAVAAALELDPEKFGDPALKTQKVGEGASIVSAIPRVREVLVNFQRQFAADPPGAVLDGRDIGTVICPHADVKIFVVADPKVRARRRTMEAKARGEAADEAAVLADIIQRDERDKNRPIAPLKPAPDAYLLDNSQLDIEGGVRAAIDIIEAVRAGRSRG</sequence>